<proteinExistence type="inferred from homology"/>
<organism>
    <name type="scientific">Homo sapiens</name>
    <name type="common">Human</name>
    <dbReference type="NCBI Taxonomy" id="9606"/>
    <lineage>
        <taxon>Eukaryota</taxon>
        <taxon>Metazoa</taxon>
        <taxon>Chordata</taxon>
        <taxon>Craniata</taxon>
        <taxon>Vertebrata</taxon>
        <taxon>Euteleostomi</taxon>
        <taxon>Mammalia</taxon>
        <taxon>Eutheria</taxon>
        <taxon>Euarchontoglires</taxon>
        <taxon>Primates</taxon>
        <taxon>Haplorrhini</taxon>
        <taxon>Catarrhini</taxon>
        <taxon>Hominidae</taxon>
        <taxon>Homo</taxon>
    </lineage>
</organism>
<sequence>MWPQARLPPHPAMAEETRQSKLAAAKRKLKEYWQRNSPGVPAGAKRNRKTNGSIHETATSGGCHSPGDSATGIHGESPTSSATLKDLESPCQELAVVPDSRSVKVSQLKNTIKSLKQQKKQVVHQLEEEKKANNEKQKAERELEVQIQRLNIQKGKLNTDLYHTKRSLRYFEEESKDLAVRLQHSLQRKGELERALSAVTATQKKKAERQFSSRSKARTEWKLEQSMREQALLKAQLTQLKESLKEVQLERDEYAEHLKGERARWQQRMRKMSQEVCSLKKEKKHDKYRVETLERSLSKLKNQMAEPLPPEPPAVPSEAELQHLRKELERVAGALQAQVEYNQRISLLNEGQKERLREQQERLPEQEERLQQLAEPQNSFKELNNENKSVLQLEQQVKELQEKLGKERLEAASQQKQQLTAQLSLMALPGEGDGGGHLDSEGEEAPRPIPSIPQDLESREAMSSFMDHLEEKADLSELVKKQELRFIQYWQERCHQKIHHLLSEPGGRAKDAALGGGHHQAGAQGGDEDEAAGAAADGIAAYSNYNNGHRKFLAAAHNPADEPGPGAPAPQELGAADKHGDLCEVSLTSSAQGEAREDPLLDKPTAQPIVQDHQEHPGLGNNCCVPFFCWAWLPRRRR</sequence>
<accession>H3BPF8</accession>
<comment type="similarity">
    <text evidence="3">Belongs to the GOLGA8 family.</text>
</comment>
<evidence type="ECO:0000255" key="1"/>
<evidence type="ECO:0000256" key="2">
    <source>
        <dbReference type="SAM" id="MobiDB-lite"/>
    </source>
</evidence>
<evidence type="ECO:0000305" key="3"/>
<evidence type="ECO:0000312" key="4">
    <source>
        <dbReference type="HGNC" id="HGNC:44409"/>
    </source>
</evidence>
<keyword id="KW-0175">Coiled coil</keyword>
<keyword id="KW-1185">Reference proteome</keyword>
<name>GOG8S_HUMAN</name>
<dbReference type="EMBL" id="AC100756">
    <property type="status" value="NOT_ANNOTATED_CDS"/>
    <property type="molecule type" value="Genomic_DNA"/>
</dbReference>
<dbReference type="CCDS" id="CCDS91964.1"/>
<dbReference type="RefSeq" id="NP_001382302.1">
    <property type="nucleotide sequence ID" value="NM_001395373.1"/>
</dbReference>
<dbReference type="SMR" id="H3BPF8"/>
<dbReference type="FunCoup" id="H3BPF8">
    <property type="interactions" value="58"/>
</dbReference>
<dbReference type="STRING" id="9606.ENSP00000455298"/>
<dbReference type="GlyGen" id="H3BPF8">
    <property type="glycosylation" value="1 site"/>
</dbReference>
<dbReference type="BioMuta" id="GOLGA8S"/>
<dbReference type="jPOST" id="H3BPF8"/>
<dbReference type="MassIVE" id="H3BPF8"/>
<dbReference type="PaxDb" id="9606-ENSP00000455298"/>
<dbReference type="PeptideAtlas" id="H3BPF8"/>
<dbReference type="Ensembl" id="ENST00000562295.3">
    <property type="protein sequence ID" value="ENSP00000455298.2"/>
    <property type="gene ID" value="ENSG00000261739.3"/>
</dbReference>
<dbReference type="GeneID" id="653061"/>
<dbReference type="MANE-Select" id="ENST00000562295.3">
    <property type="protein sequence ID" value="ENSP00000455298.2"/>
    <property type="RefSeq nucleotide sequence ID" value="NM_001395373.1"/>
    <property type="RefSeq protein sequence ID" value="NP_001382302.1"/>
</dbReference>
<dbReference type="UCSC" id="uc059gsm.1">
    <property type="organism name" value="human"/>
</dbReference>
<dbReference type="AGR" id="HGNC:44409"/>
<dbReference type="GeneCards" id="GOLGA8S"/>
<dbReference type="HGNC" id="HGNC:44409">
    <property type="gene designation" value="GOLGA8S"/>
</dbReference>
<dbReference type="HPA" id="ENSG00000261739">
    <property type="expression patterns" value="Tissue enriched (testis)"/>
</dbReference>
<dbReference type="neXtProt" id="NX_H3BPF8"/>
<dbReference type="VEuPathDB" id="HostDB:ENSG00000261739"/>
<dbReference type="eggNOG" id="KOG4725">
    <property type="taxonomic scope" value="Eukaryota"/>
</dbReference>
<dbReference type="GeneTree" id="ENSGT00530000062932"/>
<dbReference type="HOGENOM" id="CLU_012403_1_2_1"/>
<dbReference type="InParanoid" id="H3BPF8"/>
<dbReference type="OrthoDB" id="9837597at2759"/>
<dbReference type="PAN-GO" id="H3BPF8">
    <property type="GO annotations" value="4 GO annotations based on evolutionary models"/>
</dbReference>
<dbReference type="PhylomeDB" id="H3BPF8"/>
<dbReference type="TreeFam" id="TF316990"/>
<dbReference type="Pharos" id="H3BPF8">
    <property type="development level" value="Tdark"/>
</dbReference>
<dbReference type="PRO" id="PR:H3BPF8"/>
<dbReference type="Proteomes" id="UP000005640">
    <property type="component" value="Chromosome 15"/>
</dbReference>
<dbReference type="RNAct" id="H3BPF8">
    <property type="molecule type" value="protein"/>
</dbReference>
<dbReference type="Bgee" id="ENSG00000261739">
    <property type="expression patterns" value="Expressed in left testis and 91 other cell types or tissues"/>
</dbReference>
<dbReference type="GO" id="GO:0005801">
    <property type="term" value="C:cis-Golgi network"/>
    <property type="evidence" value="ECO:0000318"/>
    <property type="project" value="GO_Central"/>
</dbReference>
<dbReference type="GO" id="GO:0000137">
    <property type="term" value="C:Golgi cis cisterna"/>
    <property type="evidence" value="ECO:0000318"/>
    <property type="project" value="GO_Central"/>
</dbReference>
<dbReference type="GO" id="GO:0032580">
    <property type="term" value="C:Golgi cisterna membrane"/>
    <property type="evidence" value="ECO:0000318"/>
    <property type="project" value="GO_Central"/>
</dbReference>
<dbReference type="GO" id="GO:0007030">
    <property type="term" value="P:Golgi organization"/>
    <property type="evidence" value="ECO:0000318"/>
    <property type="project" value="GO_Central"/>
</dbReference>
<dbReference type="InterPro" id="IPR043937">
    <property type="entry name" value="GM130_C"/>
</dbReference>
<dbReference type="InterPro" id="IPR043976">
    <property type="entry name" value="GOLGA_cons_dom"/>
</dbReference>
<dbReference type="InterPro" id="IPR024858">
    <property type="entry name" value="Golgin_A"/>
</dbReference>
<dbReference type="PANTHER" id="PTHR10881:SF7">
    <property type="entry name" value="GOLGIN SUBFAMILY A MEMBER 8C-RELATED"/>
    <property type="match status" value="1"/>
</dbReference>
<dbReference type="PANTHER" id="PTHR10881">
    <property type="entry name" value="GOLGIN SUBFAMILY A MEMBER-RELATED"/>
    <property type="match status" value="1"/>
</dbReference>
<dbReference type="Pfam" id="PF19046">
    <property type="entry name" value="GM130_C"/>
    <property type="match status" value="1"/>
</dbReference>
<dbReference type="Pfam" id="PF15070">
    <property type="entry name" value="GOLGA2L5"/>
    <property type="match status" value="2"/>
</dbReference>
<feature type="chain" id="PRO_0000444804" description="Golgin subfamily A member 8S">
    <location>
        <begin position="1"/>
        <end position="638"/>
    </location>
</feature>
<feature type="region of interest" description="Disordered" evidence="2">
    <location>
        <begin position="1"/>
        <end position="84"/>
    </location>
</feature>
<feature type="region of interest" description="Disordered" evidence="2">
    <location>
        <begin position="427"/>
        <end position="453"/>
    </location>
</feature>
<feature type="region of interest" description="Disordered" evidence="2">
    <location>
        <begin position="510"/>
        <end position="532"/>
    </location>
</feature>
<feature type="region of interest" description="Disordered" evidence="2">
    <location>
        <begin position="556"/>
        <end position="575"/>
    </location>
</feature>
<feature type="coiled-coil region" evidence="1">
    <location>
        <begin position="105"/>
        <end position="160"/>
    </location>
</feature>
<feature type="coiled-coil region" evidence="1">
    <location>
        <begin position="223"/>
        <end position="275"/>
    </location>
</feature>
<feature type="coiled-coil region" evidence="1">
    <location>
        <begin position="318"/>
        <end position="417"/>
    </location>
</feature>
<feature type="compositionally biased region" description="Pro residues" evidence="2">
    <location>
        <begin position="1"/>
        <end position="11"/>
    </location>
</feature>
<feature type="compositionally biased region" description="Polar residues" evidence="2">
    <location>
        <begin position="50"/>
        <end position="62"/>
    </location>
</feature>
<feature type="compositionally biased region" description="Basic and acidic residues" evidence="2">
    <location>
        <begin position="434"/>
        <end position="446"/>
    </location>
</feature>
<feature type="compositionally biased region" description="Gly residues" evidence="2">
    <location>
        <begin position="514"/>
        <end position="525"/>
    </location>
</feature>
<feature type="compositionally biased region" description="Low complexity" evidence="2">
    <location>
        <begin position="561"/>
        <end position="574"/>
    </location>
</feature>
<reference key="1">
    <citation type="journal article" date="2006" name="Nature">
        <title>Analysis of the DNA sequence and duplication history of human chromosome 15.</title>
        <authorList>
            <person name="Zody M.C."/>
            <person name="Garber M."/>
            <person name="Sharpe T."/>
            <person name="Young S.K."/>
            <person name="Rowen L."/>
            <person name="O'Neill K."/>
            <person name="Whittaker C.A."/>
            <person name="Kamal M."/>
            <person name="Chang J.L."/>
            <person name="Cuomo C.A."/>
            <person name="Dewar K."/>
            <person name="FitzGerald M.G."/>
            <person name="Kodira C.D."/>
            <person name="Madan A."/>
            <person name="Qin S."/>
            <person name="Yang X."/>
            <person name="Abbasi N."/>
            <person name="Abouelleil A."/>
            <person name="Arachchi H.M."/>
            <person name="Baradarani L."/>
            <person name="Birditt B."/>
            <person name="Bloom S."/>
            <person name="Bloom T."/>
            <person name="Borowsky M.L."/>
            <person name="Burke J."/>
            <person name="Butler J."/>
            <person name="Cook A."/>
            <person name="DeArellano K."/>
            <person name="DeCaprio D."/>
            <person name="Dorris L. III"/>
            <person name="Dors M."/>
            <person name="Eichler E.E."/>
            <person name="Engels R."/>
            <person name="Fahey J."/>
            <person name="Fleetwood P."/>
            <person name="Friedman C."/>
            <person name="Gearin G."/>
            <person name="Hall J.L."/>
            <person name="Hensley G."/>
            <person name="Johnson E."/>
            <person name="Jones C."/>
            <person name="Kamat A."/>
            <person name="Kaur A."/>
            <person name="Locke D.P."/>
            <person name="Madan A."/>
            <person name="Munson G."/>
            <person name="Jaffe D.B."/>
            <person name="Lui A."/>
            <person name="Macdonald P."/>
            <person name="Mauceli E."/>
            <person name="Naylor J.W."/>
            <person name="Nesbitt R."/>
            <person name="Nicol R."/>
            <person name="O'Leary S.B."/>
            <person name="Ratcliffe A."/>
            <person name="Rounsley S."/>
            <person name="She X."/>
            <person name="Sneddon K.M.B."/>
            <person name="Stewart S."/>
            <person name="Sougnez C."/>
            <person name="Stone S.M."/>
            <person name="Topham K."/>
            <person name="Vincent D."/>
            <person name="Wang S."/>
            <person name="Zimmer A.R."/>
            <person name="Birren B.W."/>
            <person name="Hood L."/>
            <person name="Lander E.S."/>
            <person name="Nusbaum C."/>
        </authorList>
    </citation>
    <scope>NUCLEOTIDE SEQUENCE [LARGE SCALE GENOMIC DNA]</scope>
</reference>
<gene>
    <name evidence="4" type="primary">GOLGA8S</name>
</gene>
<protein>
    <recommendedName>
        <fullName evidence="3">Golgin subfamily A member 8S</fullName>
    </recommendedName>
</protein>